<feature type="chain" id="PRO_1000122632" description="Putative membrane protein insertion efficiency factor">
    <location>
        <begin position="1"/>
        <end position="93"/>
    </location>
</feature>
<proteinExistence type="inferred from homology"/>
<comment type="function">
    <text evidence="1">Could be involved in insertion of integral membrane proteins into the membrane.</text>
</comment>
<comment type="subcellular location">
    <subcellularLocation>
        <location evidence="1">Cell inner membrane</location>
        <topology evidence="1">Peripheral membrane protein</topology>
        <orientation evidence="1">Cytoplasmic side</orientation>
    </subcellularLocation>
</comment>
<comment type="similarity">
    <text evidence="1">Belongs to the UPF0161 family.</text>
</comment>
<evidence type="ECO:0000255" key="1">
    <source>
        <dbReference type="HAMAP-Rule" id="MF_00386"/>
    </source>
</evidence>
<sequence length="93" mass="10111">MKRILLALLRVYKIALSPYLGSQCRFLPTCSDYARDAIVHHGAARGSWMAACRLCRCHPFAQGGYDPVPGTEADTPVHAATGHAPVAIRLPRP</sequence>
<name>YIDD_CUPTR</name>
<gene>
    <name type="ordered locus">RALTA_A3218</name>
</gene>
<accession>B3R884</accession>
<reference key="1">
    <citation type="journal article" date="2008" name="Genome Res.">
        <title>Genome sequence of the beta-rhizobium Cupriavidus taiwanensis and comparative genomics of rhizobia.</title>
        <authorList>
            <person name="Amadou C."/>
            <person name="Pascal G."/>
            <person name="Mangenot S."/>
            <person name="Glew M."/>
            <person name="Bontemps C."/>
            <person name="Capela D."/>
            <person name="Carrere S."/>
            <person name="Cruveiller S."/>
            <person name="Dossat C."/>
            <person name="Lajus A."/>
            <person name="Marchetti M."/>
            <person name="Poinsot V."/>
            <person name="Rouy Z."/>
            <person name="Servin B."/>
            <person name="Saad M."/>
            <person name="Schenowitz C."/>
            <person name="Barbe V."/>
            <person name="Batut J."/>
            <person name="Medigue C."/>
            <person name="Masson-Boivin C."/>
        </authorList>
    </citation>
    <scope>NUCLEOTIDE SEQUENCE [LARGE SCALE GENOMIC DNA]</scope>
    <source>
        <strain>DSM 17343 / BCRC 17206 / CCUG 44338 / CIP 107171 / LMG 19424 / R1</strain>
    </source>
</reference>
<keyword id="KW-0997">Cell inner membrane</keyword>
<keyword id="KW-1003">Cell membrane</keyword>
<keyword id="KW-0472">Membrane</keyword>
<dbReference type="EMBL" id="CU633749">
    <property type="protein sequence ID" value="CAQ71134.1"/>
    <property type="molecule type" value="Genomic_DNA"/>
</dbReference>
<dbReference type="GeneID" id="29763288"/>
<dbReference type="KEGG" id="cti:RALTA_A3218"/>
<dbReference type="eggNOG" id="COG0759">
    <property type="taxonomic scope" value="Bacteria"/>
</dbReference>
<dbReference type="HOGENOM" id="CLU_144811_2_0_4"/>
<dbReference type="BioCyc" id="CTAI977880:RALTA_RS15730-MONOMER"/>
<dbReference type="Proteomes" id="UP000001692">
    <property type="component" value="Chromosome 1"/>
</dbReference>
<dbReference type="GO" id="GO:0005886">
    <property type="term" value="C:plasma membrane"/>
    <property type="evidence" value="ECO:0007669"/>
    <property type="project" value="UniProtKB-SubCell"/>
</dbReference>
<dbReference type="HAMAP" id="MF_00386">
    <property type="entry name" value="UPF0161_YidD"/>
    <property type="match status" value="1"/>
</dbReference>
<dbReference type="InterPro" id="IPR002696">
    <property type="entry name" value="Membr_insert_effic_factor_YidD"/>
</dbReference>
<dbReference type="NCBIfam" id="TIGR00278">
    <property type="entry name" value="membrane protein insertion efficiency factor YidD"/>
    <property type="match status" value="1"/>
</dbReference>
<dbReference type="PANTHER" id="PTHR33383">
    <property type="entry name" value="MEMBRANE PROTEIN INSERTION EFFICIENCY FACTOR-RELATED"/>
    <property type="match status" value="1"/>
</dbReference>
<dbReference type="PANTHER" id="PTHR33383:SF1">
    <property type="entry name" value="MEMBRANE PROTEIN INSERTION EFFICIENCY FACTOR-RELATED"/>
    <property type="match status" value="1"/>
</dbReference>
<dbReference type="Pfam" id="PF01809">
    <property type="entry name" value="YidD"/>
    <property type="match status" value="1"/>
</dbReference>
<dbReference type="SMART" id="SM01234">
    <property type="entry name" value="Haemolytic"/>
    <property type="match status" value="1"/>
</dbReference>
<protein>
    <recommendedName>
        <fullName evidence="1">Putative membrane protein insertion efficiency factor</fullName>
    </recommendedName>
</protein>
<organism>
    <name type="scientific">Cupriavidus taiwanensis (strain DSM 17343 / BCRC 17206 / CCUG 44338 / CIP 107171 / LMG 19424 / R1)</name>
    <name type="common">Ralstonia taiwanensis (strain LMG 19424)</name>
    <dbReference type="NCBI Taxonomy" id="977880"/>
    <lineage>
        <taxon>Bacteria</taxon>
        <taxon>Pseudomonadati</taxon>
        <taxon>Pseudomonadota</taxon>
        <taxon>Betaproteobacteria</taxon>
        <taxon>Burkholderiales</taxon>
        <taxon>Burkholderiaceae</taxon>
        <taxon>Cupriavidus</taxon>
    </lineage>
</organism>